<keyword id="KW-0067">ATP-binding</keyword>
<keyword id="KW-0963">Cytoplasm</keyword>
<keyword id="KW-0418">Kinase</keyword>
<keyword id="KW-0547">Nucleotide-binding</keyword>
<keyword id="KW-0808">Transferase</keyword>
<sequence>MTIVHVITIDGPTASGKGTVAHKVADAVGYHLLDSGALYRLVALASDRIGVDIEDVDGLAKTASRLDVKFGPDRVWLSGEEVSLAIRAEAIGNRASAIAVHQPVRDALTKLQRDFRKLPGLVADGRDMGTVIFPDAQLKVFLTASVEARARRRYKQLIDKGISANIEDLLRDLEARDARDRNRAAAPLRPAEDAKLLDTSDMTVDQAVAQVLEWFAAVRKA</sequence>
<gene>
    <name evidence="1" type="primary">cmk</name>
    <name type="ordered locus">Reut_A2570</name>
</gene>
<proteinExistence type="inferred from homology"/>
<name>KCY_CUPPJ</name>
<organism>
    <name type="scientific">Cupriavidus pinatubonensis (strain JMP 134 / LMG 1197)</name>
    <name type="common">Cupriavidus necator (strain JMP 134)</name>
    <dbReference type="NCBI Taxonomy" id="264198"/>
    <lineage>
        <taxon>Bacteria</taxon>
        <taxon>Pseudomonadati</taxon>
        <taxon>Pseudomonadota</taxon>
        <taxon>Betaproteobacteria</taxon>
        <taxon>Burkholderiales</taxon>
        <taxon>Burkholderiaceae</taxon>
        <taxon>Cupriavidus</taxon>
    </lineage>
</organism>
<protein>
    <recommendedName>
        <fullName evidence="1">Cytidylate kinase</fullName>
        <shortName evidence="1">CK</shortName>
        <ecNumber evidence="1">2.7.4.25</ecNumber>
    </recommendedName>
    <alternativeName>
        <fullName evidence="1">Cytidine monophosphate kinase</fullName>
        <shortName evidence="1">CMP kinase</shortName>
    </alternativeName>
</protein>
<dbReference type="EC" id="2.7.4.25" evidence="1"/>
<dbReference type="EMBL" id="CP000090">
    <property type="protein sequence ID" value="AAZ61931.1"/>
    <property type="molecule type" value="Genomic_DNA"/>
</dbReference>
<dbReference type="SMR" id="Q46Y52"/>
<dbReference type="STRING" id="264198.Reut_A2570"/>
<dbReference type="KEGG" id="reu:Reut_A2570"/>
<dbReference type="eggNOG" id="COG0283">
    <property type="taxonomic scope" value="Bacteria"/>
</dbReference>
<dbReference type="HOGENOM" id="CLU_079959_2_0_4"/>
<dbReference type="OrthoDB" id="9807434at2"/>
<dbReference type="GO" id="GO:0005829">
    <property type="term" value="C:cytosol"/>
    <property type="evidence" value="ECO:0007669"/>
    <property type="project" value="TreeGrafter"/>
</dbReference>
<dbReference type="GO" id="GO:0005524">
    <property type="term" value="F:ATP binding"/>
    <property type="evidence" value="ECO:0007669"/>
    <property type="project" value="UniProtKB-UniRule"/>
</dbReference>
<dbReference type="GO" id="GO:0036430">
    <property type="term" value="F:CMP kinase activity"/>
    <property type="evidence" value="ECO:0007669"/>
    <property type="project" value="RHEA"/>
</dbReference>
<dbReference type="GO" id="GO:0036431">
    <property type="term" value="F:dCMP kinase activity"/>
    <property type="evidence" value="ECO:0007669"/>
    <property type="project" value="RHEA"/>
</dbReference>
<dbReference type="GO" id="GO:0015949">
    <property type="term" value="P:nucleobase-containing small molecule interconversion"/>
    <property type="evidence" value="ECO:0007669"/>
    <property type="project" value="TreeGrafter"/>
</dbReference>
<dbReference type="GO" id="GO:0006220">
    <property type="term" value="P:pyrimidine nucleotide metabolic process"/>
    <property type="evidence" value="ECO:0007669"/>
    <property type="project" value="UniProtKB-UniRule"/>
</dbReference>
<dbReference type="CDD" id="cd02020">
    <property type="entry name" value="CMPK"/>
    <property type="match status" value="1"/>
</dbReference>
<dbReference type="Gene3D" id="3.40.50.300">
    <property type="entry name" value="P-loop containing nucleotide triphosphate hydrolases"/>
    <property type="match status" value="1"/>
</dbReference>
<dbReference type="HAMAP" id="MF_00238">
    <property type="entry name" value="Cytidyl_kinase_type1"/>
    <property type="match status" value="1"/>
</dbReference>
<dbReference type="InterPro" id="IPR003136">
    <property type="entry name" value="Cytidylate_kin"/>
</dbReference>
<dbReference type="InterPro" id="IPR011994">
    <property type="entry name" value="Cytidylate_kinase_dom"/>
</dbReference>
<dbReference type="InterPro" id="IPR027417">
    <property type="entry name" value="P-loop_NTPase"/>
</dbReference>
<dbReference type="NCBIfam" id="TIGR00017">
    <property type="entry name" value="cmk"/>
    <property type="match status" value="1"/>
</dbReference>
<dbReference type="PANTHER" id="PTHR21299:SF2">
    <property type="entry name" value="CYTIDYLATE KINASE"/>
    <property type="match status" value="1"/>
</dbReference>
<dbReference type="PANTHER" id="PTHR21299">
    <property type="entry name" value="CYTIDYLATE KINASE/PANTOATE-BETA-ALANINE LIGASE"/>
    <property type="match status" value="1"/>
</dbReference>
<dbReference type="Pfam" id="PF02224">
    <property type="entry name" value="Cytidylate_kin"/>
    <property type="match status" value="1"/>
</dbReference>
<dbReference type="SUPFAM" id="SSF52540">
    <property type="entry name" value="P-loop containing nucleoside triphosphate hydrolases"/>
    <property type="match status" value="1"/>
</dbReference>
<comment type="catalytic activity">
    <reaction evidence="1">
        <text>CMP + ATP = CDP + ADP</text>
        <dbReference type="Rhea" id="RHEA:11600"/>
        <dbReference type="ChEBI" id="CHEBI:30616"/>
        <dbReference type="ChEBI" id="CHEBI:58069"/>
        <dbReference type="ChEBI" id="CHEBI:60377"/>
        <dbReference type="ChEBI" id="CHEBI:456216"/>
        <dbReference type="EC" id="2.7.4.25"/>
    </reaction>
</comment>
<comment type="catalytic activity">
    <reaction evidence="1">
        <text>dCMP + ATP = dCDP + ADP</text>
        <dbReference type="Rhea" id="RHEA:25094"/>
        <dbReference type="ChEBI" id="CHEBI:30616"/>
        <dbReference type="ChEBI" id="CHEBI:57566"/>
        <dbReference type="ChEBI" id="CHEBI:58593"/>
        <dbReference type="ChEBI" id="CHEBI:456216"/>
        <dbReference type="EC" id="2.7.4.25"/>
    </reaction>
</comment>
<comment type="subcellular location">
    <subcellularLocation>
        <location evidence="1">Cytoplasm</location>
    </subcellularLocation>
</comment>
<comment type="similarity">
    <text evidence="1">Belongs to the cytidylate kinase family. Type 1 subfamily.</text>
</comment>
<accession>Q46Y52</accession>
<evidence type="ECO:0000255" key="1">
    <source>
        <dbReference type="HAMAP-Rule" id="MF_00238"/>
    </source>
</evidence>
<reference key="1">
    <citation type="journal article" date="2010" name="PLoS ONE">
        <title>The complete multipartite genome sequence of Cupriavidus necator JMP134, a versatile pollutant degrader.</title>
        <authorList>
            <person name="Lykidis A."/>
            <person name="Perez-Pantoja D."/>
            <person name="Ledger T."/>
            <person name="Mavromatis K."/>
            <person name="Anderson I.J."/>
            <person name="Ivanova N.N."/>
            <person name="Hooper S.D."/>
            <person name="Lapidus A."/>
            <person name="Lucas S."/>
            <person name="Gonzalez B."/>
            <person name="Kyrpides N.C."/>
        </authorList>
    </citation>
    <scope>NUCLEOTIDE SEQUENCE [LARGE SCALE GENOMIC DNA]</scope>
    <source>
        <strain>JMP134 / LMG 1197</strain>
    </source>
</reference>
<feature type="chain" id="PRO_1000048257" description="Cytidylate kinase">
    <location>
        <begin position="1"/>
        <end position="221"/>
    </location>
</feature>
<feature type="binding site" evidence="1">
    <location>
        <begin position="11"/>
        <end position="19"/>
    </location>
    <ligand>
        <name>ATP</name>
        <dbReference type="ChEBI" id="CHEBI:30616"/>
    </ligand>
</feature>